<dbReference type="EC" id="4.2.1.41"/>
<dbReference type="EMBL" id="M69160">
    <property type="protein sequence ID" value="AAA25869.1"/>
    <property type="molecule type" value="Genomic_DNA"/>
</dbReference>
<dbReference type="PIR" id="S27618">
    <property type="entry name" value="S27618"/>
</dbReference>
<dbReference type="SMR" id="P42233"/>
<dbReference type="UniPathway" id="UPA00564">
    <property type="reaction ID" value="UER00628"/>
</dbReference>
<dbReference type="GO" id="GO:0008840">
    <property type="term" value="F:4-hydroxy-tetrahydrodipicolinate synthase activity"/>
    <property type="evidence" value="ECO:0007669"/>
    <property type="project" value="TreeGrafter"/>
</dbReference>
<dbReference type="GO" id="GO:0047448">
    <property type="term" value="F:5-dehydro-4-deoxyglucarate dehydratase activity"/>
    <property type="evidence" value="ECO:0007669"/>
    <property type="project" value="UniProtKB-UniRule"/>
</dbReference>
<dbReference type="GO" id="GO:0042838">
    <property type="term" value="P:D-glucarate catabolic process"/>
    <property type="evidence" value="ECO:0007669"/>
    <property type="project" value="UniProtKB-UniRule"/>
</dbReference>
<dbReference type="CDD" id="cd00951">
    <property type="entry name" value="KDGDH"/>
    <property type="match status" value="1"/>
</dbReference>
<dbReference type="Gene3D" id="3.20.20.70">
    <property type="entry name" value="Aldolase class I"/>
    <property type="match status" value="1"/>
</dbReference>
<dbReference type="HAMAP" id="MF_00694">
    <property type="entry name" value="KDGDH"/>
    <property type="match status" value="1"/>
</dbReference>
<dbReference type="InterPro" id="IPR013785">
    <property type="entry name" value="Aldolase_TIM"/>
</dbReference>
<dbReference type="InterPro" id="IPR002220">
    <property type="entry name" value="DapA-like"/>
</dbReference>
<dbReference type="InterPro" id="IPR017655">
    <property type="entry name" value="Dehydro-deoxyglucarate_dehyd"/>
</dbReference>
<dbReference type="NCBIfam" id="TIGR03249">
    <property type="entry name" value="KdgD"/>
    <property type="match status" value="1"/>
</dbReference>
<dbReference type="NCBIfam" id="NF002958">
    <property type="entry name" value="PRK03620.1"/>
    <property type="match status" value="1"/>
</dbReference>
<dbReference type="PANTHER" id="PTHR12128:SF19">
    <property type="entry name" value="5-DEHYDRO-4-DEOXYGLUCARATE DEHYDRATASE 2-RELATED"/>
    <property type="match status" value="1"/>
</dbReference>
<dbReference type="PANTHER" id="PTHR12128">
    <property type="entry name" value="DIHYDRODIPICOLINATE SYNTHASE"/>
    <property type="match status" value="1"/>
</dbReference>
<dbReference type="Pfam" id="PF00701">
    <property type="entry name" value="DHDPS"/>
    <property type="match status" value="1"/>
</dbReference>
<dbReference type="PIRSF" id="PIRSF001365">
    <property type="entry name" value="DHDPS"/>
    <property type="match status" value="1"/>
</dbReference>
<dbReference type="PRINTS" id="PR00146">
    <property type="entry name" value="DHPICSNTHASE"/>
</dbReference>
<dbReference type="SMART" id="SM01130">
    <property type="entry name" value="DHDPS"/>
    <property type="match status" value="1"/>
</dbReference>
<dbReference type="SUPFAM" id="SSF51569">
    <property type="entry name" value="Aldolase"/>
    <property type="match status" value="1"/>
</dbReference>
<sequence>MNPQELKSILSEGLLSFPLTDFDVAGDFRADTYAKRLEWLAPYGASALFAAGGTGEFFSLQASEYSEIIKVAVDTCRGEVPILAGTGGPTRQAIAYAQEAERLGAAGVLLLPHYLTEASQEGLVSHVEQVCKSVDFGVVVYNRNVCRLNADSLEKLADRCPNLIGFKDGVGDIESMVSIRRRLGERLTYLGGLPTAEVYAAAYKAMGVPVYSSAVFNFIPKTAMDFYRAVASEDHETVGKLIDDFFLPYLDIRNRCEGYGVSIVKAGARLVGHDAGPVRAPLTDLLPNEMEQLDALIKKLGAQ</sequence>
<keyword id="KW-0456">Lyase</keyword>
<proteinExistence type="inferred from homology"/>
<accession>P42233</accession>
<name>KDGD_PSEPU</name>
<feature type="chain" id="PRO_0000103235" description="5-dehydro-4-deoxyglucarate dehydratase">
    <location>
        <begin position="1"/>
        <end position="303"/>
    </location>
</feature>
<protein>
    <recommendedName>
        <fullName>5-dehydro-4-deoxyglucarate dehydratase</fullName>
        <ecNumber>4.2.1.41</ecNumber>
    </recommendedName>
    <alternativeName>
        <fullName>5-keto-4-deoxy-glucarate dehydratase</fullName>
        <shortName>KDGDH</shortName>
    </alternativeName>
</protein>
<comment type="catalytic activity">
    <reaction>
        <text>5-dehydro-4-deoxy-D-glucarate + H(+) = 2,5-dioxopentanoate + CO2 + H2O</text>
        <dbReference type="Rhea" id="RHEA:24608"/>
        <dbReference type="ChEBI" id="CHEBI:15377"/>
        <dbReference type="ChEBI" id="CHEBI:15378"/>
        <dbReference type="ChEBI" id="CHEBI:16526"/>
        <dbReference type="ChEBI" id="CHEBI:42819"/>
        <dbReference type="ChEBI" id="CHEBI:58136"/>
        <dbReference type="EC" id="4.2.1.41"/>
    </reaction>
</comment>
<comment type="pathway">
    <text>Carbohydrate acid metabolism; D-glucarate degradation; 2,5-dioxopentanoate from D-glucarate: step 2/2.</text>
</comment>
<comment type="similarity">
    <text evidence="1">Belongs to the DapA family.</text>
</comment>
<evidence type="ECO:0000305" key="1"/>
<reference key="1">
    <citation type="submission" date="1992-06" db="EMBL/GenBank/DDBJ databases">
        <title>Nucleotide sequence of genes for glucarate dehydratase and 5-keto-4-deoxyglucarate dehydratase from Pseudomonas putida pp3.</title>
        <authorList>
            <person name="Burlingame R.P."/>
            <person name="Lauer G.D."/>
            <person name="Platz J.G."/>
            <person name="Rudd E.A."/>
            <person name="Ally A."/>
            <person name="Ally D."/>
            <person name="Backman K.C."/>
        </authorList>
    </citation>
    <scope>NUCLEOTIDE SEQUENCE [GENOMIC DNA]</scope>
    <source>
        <strain>pp3</strain>
    </source>
</reference>
<organism>
    <name type="scientific">Pseudomonas putida</name>
    <name type="common">Arthrobacter siderocapsulatus</name>
    <dbReference type="NCBI Taxonomy" id="303"/>
    <lineage>
        <taxon>Bacteria</taxon>
        <taxon>Pseudomonadati</taxon>
        <taxon>Pseudomonadota</taxon>
        <taxon>Gammaproteobacteria</taxon>
        <taxon>Pseudomonadales</taxon>
        <taxon>Pseudomonadaceae</taxon>
        <taxon>Pseudomonas</taxon>
    </lineage>
</organism>